<proteinExistence type="inferred from homology"/>
<gene>
    <name evidence="1" type="primary">purL</name>
    <name type="ordered locus">Rsph17025_0894</name>
</gene>
<dbReference type="EC" id="6.3.5.3" evidence="1"/>
<dbReference type="EMBL" id="CP000661">
    <property type="protein sequence ID" value="ABP69797.1"/>
    <property type="molecule type" value="Genomic_DNA"/>
</dbReference>
<dbReference type="SMR" id="A4WQY3"/>
<dbReference type="STRING" id="349102.Rsph17025_0894"/>
<dbReference type="KEGG" id="rsq:Rsph17025_0894"/>
<dbReference type="eggNOG" id="COG0046">
    <property type="taxonomic scope" value="Bacteria"/>
</dbReference>
<dbReference type="HOGENOM" id="CLU_003100_0_1_5"/>
<dbReference type="BioCyc" id="RSPH349102:G1G8M-917-MONOMER"/>
<dbReference type="UniPathway" id="UPA00074">
    <property type="reaction ID" value="UER00128"/>
</dbReference>
<dbReference type="GO" id="GO:0005737">
    <property type="term" value="C:cytoplasm"/>
    <property type="evidence" value="ECO:0007669"/>
    <property type="project" value="UniProtKB-SubCell"/>
</dbReference>
<dbReference type="GO" id="GO:0005524">
    <property type="term" value="F:ATP binding"/>
    <property type="evidence" value="ECO:0007669"/>
    <property type="project" value="UniProtKB-UniRule"/>
</dbReference>
<dbReference type="GO" id="GO:0000287">
    <property type="term" value="F:magnesium ion binding"/>
    <property type="evidence" value="ECO:0007669"/>
    <property type="project" value="UniProtKB-UniRule"/>
</dbReference>
<dbReference type="GO" id="GO:0004642">
    <property type="term" value="F:phosphoribosylformylglycinamidine synthase activity"/>
    <property type="evidence" value="ECO:0007669"/>
    <property type="project" value="UniProtKB-UniRule"/>
</dbReference>
<dbReference type="GO" id="GO:0006189">
    <property type="term" value="P:'de novo' IMP biosynthetic process"/>
    <property type="evidence" value="ECO:0007669"/>
    <property type="project" value="UniProtKB-UniRule"/>
</dbReference>
<dbReference type="CDD" id="cd02203">
    <property type="entry name" value="PurL_repeat1"/>
    <property type="match status" value="1"/>
</dbReference>
<dbReference type="CDD" id="cd02204">
    <property type="entry name" value="PurL_repeat2"/>
    <property type="match status" value="1"/>
</dbReference>
<dbReference type="FunFam" id="3.30.1330.10:FF:000004">
    <property type="entry name" value="Phosphoribosylformylglycinamidine synthase subunit PurL"/>
    <property type="match status" value="1"/>
</dbReference>
<dbReference type="Gene3D" id="3.90.650.10">
    <property type="entry name" value="PurM-like C-terminal domain"/>
    <property type="match status" value="2"/>
</dbReference>
<dbReference type="Gene3D" id="3.30.1330.10">
    <property type="entry name" value="PurM-like, N-terminal domain"/>
    <property type="match status" value="2"/>
</dbReference>
<dbReference type="HAMAP" id="MF_00420">
    <property type="entry name" value="PurL_2"/>
    <property type="match status" value="1"/>
</dbReference>
<dbReference type="InterPro" id="IPR010074">
    <property type="entry name" value="PRibForGlyAmidine_synth_PurL"/>
</dbReference>
<dbReference type="InterPro" id="IPR041609">
    <property type="entry name" value="PurL_linker"/>
</dbReference>
<dbReference type="InterPro" id="IPR010918">
    <property type="entry name" value="PurM-like_C_dom"/>
</dbReference>
<dbReference type="InterPro" id="IPR036676">
    <property type="entry name" value="PurM-like_C_sf"/>
</dbReference>
<dbReference type="InterPro" id="IPR016188">
    <property type="entry name" value="PurM-like_N"/>
</dbReference>
<dbReference type="InterPro" id="IPR036921">
    <property type="entry name" value="PurM-like_N_sf"/>
</dbReference>
<dbReference type="NCBIfam" id="TIGR01736">
    <property type="entry name" value="FGAM_synth_II"/>
    <property type="match status" value="1"/>
</dbReference>
<dbReference type="NCBIfam" id="NF002290">
    <property type="entry name" value="PRK01213.1"/>
    <property type="match status" value="1"/>
</dbReference>
<dbReference type="PANTHER" id="PTHR43555">
    <property type="entry name" value="PHOSPHORIBOSYLFORMYLGLYCINAMIDINE SYNTHASE SUBUNIT PURL"/>
    <property type="match status" value="1"/>
</dbReference>
<dbReference type="PANTHER" id="PTHR43555:SF1">
    <property type="entry name" value="PHOSPHORIBOSYLFORMYLGLYCINAMIDINE SYNTHASE SUBUNIT PURL"/>
    <property type="match status" value="1"/>
</dbReference>
<dbReference type="Pfam" id="PF00586">
    <property type="entry name" value="AIRS"/>
    <property type="match status" value="2"/>
</dbReference>
<dbReference type="Pfam" id="PF02769">
    <property type="entry name" value="AIRS_C"/>
    <property type="match status" value="2"/>
</dbReference>
<dbReference type="Pfam" id="PF18072">
    <property type="entry name" value="FGAR-AT_linker"/>
    <property type="match status" value="1"/>
</dbReference>
<dbReference type="PIRSF" id="PIRSF001587">
    <property type="entry name" value="FGAM_synthase_II"/>
    <property type="match status" value="1"/>
</dbReference>
<dbReference type="SUPFAM" id="SSF56042">
    <property type="entry name" value="PurM C-terminal domain-like"/>
    <property type="match status" value="2"/>
</dbReference>
<dbReference type="SUPFAM" id="SSF55326">
    <property type="entry name" value="PurM N-terminal domain-like"/>
    <property type="match status" value="2"/>
</dbReference>
<feature type="chain" id="PRO_1000050345" description="Phosphoribosylformylglycinamidine synthase subunit PurL">
    <location>
        <begin position="1"/>
        <end position="719"/>
    </location>
</feature>
<feature type="active site" evidence="1">
    <location>
        <position position="47"/>
    </location>
</feature>
<feature type="active site" description="Proton acceptor" evidence="1">
    <location>
        <position position="93"/>
    </location>
</feature>
<feature type="binding site" evidence="1">
    <location>
        <position position="50"/>
    </location>
    <ligand>
        <name>ATP</name>
        <dbReference type="ChEBI" id="CHEBI:30616"/>
    </ligand>
</feature>
<feature type="binding site" evidence="1">
    <location>
        <position position="89"/>
    </location>
    <ligand>
        <name>ATP</name>
        <dbReference type="ChEBI" id="CHEBI:30616"/>
    </ligand>
</feature>
<feature type="binding site" evidence="1">
    <location>
        <position position="91"/>
    </location>
    <ligand>
        <name>Mg(2+)</name>
        <dbReference type="ChEBI" id="CHEBI:18420"/>
        <label>1</label>
    </ligand>
</feature>
<feature type="binding site" evidence="1">
    <location>
        <begin position="92"/>
        <end position="95"/>
    </location>
    <ligand>
        <name>substrate</name>
    </ligand>
</feature>
<feature type="binding site" evidence="1">
    <location>
        <position position="114"/>
    </location>
    <ligand>
        <name>substrate</name>
    </ligand>
</feature>
<feature type="binding site" evidence="1">
    <location>
        <position position="115"/>
    </location>
    <ligand>
        <name>Mg(2+)</name>
        <dbReference type="ChEBI" id="CHEBI:18420"/>
        <label>2</label>
    </ligand>
</feature>
<feature type="binding site" evidence="1">
    <location>
        <position position="238"/>
    </location>
    <ligand>
        <name>substrate</name>
    </ligand>
</feature>
<feature type="binding site" evidence="1">
    <location>
        <position position="266"/>
    </location>
    <ligand>
        <name>Mg(2+)</name>
        <dbReference type="ChEBI" id="CHEBI:18420"/>
        <label>2</label>
    </ligand>
</feature>
<feature type="binding site" evidence="1">
    <location>
        <begin position="310"/>
        <end position="312"/>
    </location>
    <ligand>
        <name>substrate</name>
    </ligand>
</feature>
<feature type="binding site" evidence="1">
    <location>
        <position position="488"/>
    </location>
    <ligand>
        <name>ATP</name>
        <dbReference type="ChEBI" id="CHEBI:30616"/>
    </ligand>
</feature>
<feature type="binding site" evidence="1">
    <location>
        <position position="525"/>
    </location>
    <ligand>
        <name>ATP</name>
        <dbReference type="ChEBI" id="CHEBI:30616"/>
    </ligand>
</feature>
<feature type="binding site" evidence="1">
    <location>
        <position position="526"/>
    </location>
    <ligand>
        <name>Mg(2+)</name>
        <dbReference type="ChEBI" id="CHEBI:18420"/>
        <label>1</label>
    </ligand>
</feature>
<feature type="binding site" evidence="1">
    <location>
        <position position="528"/>
    </location>
    <ligand>
        <name>substrate</name>
    </ligand>
</feature>
<sequence length="719" mass="75665">MTEPEITPELIAAHGLKPDEYERILGIIGREPSFTELGIFSAMWNEHCSYKSSKKWLRTLPTTGPQVICGPGENAGVVDIGDGQAVIFKMESHNHPSYIEPYQGAATGVGGILRDVFTMGARPIAAMNALSFGEPNHSKTAHIVKGVVEGIGGYGNAFGVPTVGGEVRFHRAYNGNCLVNAFAAGLADADKIFYSAASGVGMPVVYLGAKTGRDGVGGATMASAEFDDTIEEKRPTVQVGDPFTEKRLLEACLELMASDSVISIQDMGAAGLTCSAVEMGDKGDLGIKLQLDNVPQREANMTAYEMMLSESQERMLMVLKPEKEAVARAIFEKWDLDFAIVGETIPEDRFLILHGNEVKADLPLKALSGTAPEYDRPWVETPAAAPMAPVAEVDPIEGLKALIGSPSYAHKAWVWEQYDSQVMADTVRAPGLGAGVVRVHGTPKALAFTSDVTPRYVKANPFEGGKQAVAEAYRNLTAVGAKPLATTDNMNFGNPEKPEIMGQFVGAIKGIGAAVAALDMPIVSGNVSLYNETDGVAILPTPTIGAVGILQSLDELIAGQPEEGDVALVIGETKGHLGQSALLAELLGREDGDAPHVDLDAEKRHGEFLRANRKLVSAATDLSDGGLALAAFEMAEGAGLGLTLTVTGTAQLFGEDQARYLVAVHPDQTKALQAAAEAAGVPLQQVGQFGGEEVTLGTVSAPLVDLSRLHRGAFAAAIG</sequence>
<reference key="1">
    <citation type="submission" date="2007-04" db="EMBL/GenBank/DDBJ databases">
        <title>Complete sequence of chromosome of Rhodobacter sphaeroides ATCC 17025.</title>
        <authorList>
            <consortium name="US DOE Joint Genome Institute"/>
            <person name="Copeland A."/>
            <person name="Lucas S."/>
            <person name="Lapidus A."/>
            <person name="Barry K."/>
            <person name="Detter J.C."/>
            <person name="Glavina del Rio T."/>
            <person name="Hammon N."/>
            <person name="Israni S."/>
            <person name="Dalin E."/>
            <person name="Tice H."/>
            <person name="Pitluck S."/>
            <person name="Chertkov O."/>
            <person name="Brettin T."/>
            <person name="Bruce D."/>
            <person name="Han C."/>
            <person name="Schmutz J."/>
            <person name="Larimer F."/>
            <person name="Land M."/>
            <person name="Hauser L."/>
            <person name="Kyrpides N."/>
            <person name="Kim E."/>
            <person name="Richardson P."/>
            <person name="Mackenzie C."/>
            <person name="Choudhary M."/>
            <person name="Donohue T.J."/>
            <person name="Kaplan S."/>
        </authorList>
    </citation>
    <scope>NUCLEOTIDE SEQUENCE [LARGE SCALE GENOMIC DNA]</scope>
    <source>
        <strain>ATCC 17025 / ATH 2.4.3</strain>
    </source>
</reference>
<evidence type="ECO:0000255" key="1">
    <source>
        <dbReference type="HAMAP-Rule" id="MF_00420"/>
    </source>
</evidence>
<protein>
    <recommendedName>
        <fullName evidence="1">Phosphoribosylformylglycinamidine synthase subunit PurL</fullName>
        <shortName evidence="1">FGAM synthase</shortName>
        <ecNumber evidence="1">6.3.5.3</ecNumber>
    </recommendedName>
    <alternativeName>
        <fullName evidence="1">Formylglycinamide ribonucleotide amidotransferase subunit II</fullName>
        <shortName evidence="1">FGAR amidotransferase II</shortName>
        <shortName evidence="1">FGAR-AT II</shortName>
    </alternativeName>
    <alternativeName>
        <fullName evidence="1">Glutamine amidotransferase PurL</fullName>
    </alternativeName>
    <alternativeName>
        <fullName evidence="1">Phosphoribosylformylglycinamidine synthase subunit II</fullName>
    </alternativeName>
</protein>
<organism>
    <name type="scientific">Cereibacter sphaeroides (strain ATCC 17025 / ATH 2.4.3)</name>
    <name type="common">Rhodobacter sphaeroides</name>
    <dbReference type="NCBI Taxonomy" id="349102"/>
    <lineage>
        <taxon>Bacteria</taxon>
        <taxon>Pseudomonadati</taxon>
        <taxon>Pseudomonadota</taxon>
        <taxon>Alphaproteobacteria</taxon>
        <taxon>Rhodobacterales</taxon>
        <taxon>Paracoccaceae</taxon>
        <taxon>Cereibacter</taxon>
    </lineage>
</organism>
<accession>A4WQY3</accession>
<name>PURL_CERS5</name>
<comment type="function">
    <text evidence="1">Part of the phosphoribosylformylglycinamidine synthase complex involved in the purines biosynthetic pathway. Catalyzes the ATP-dependent conversion of formylglycinamide ribonucleotide (FGAR) and glutamine to yield formylglycinamidine ribonucleotide (FGAM) and glutamate. The FGAM synthase complex is composed of three subunits. PurQ produces an ammonia molecule by converting glutamine to glutamate. PurL transfers the ammonia molecule to FGAR to form FGAM in an ATP-dependent manner. PurS interacts with PurQ and PurL and is thought to assist in the transfer of the ammonia molecule from PurQ to PurL.</text>
</comment>
<comment type="catalytic activity">
    <reaction evidence="1">
        <text>N(2)-formyl-N(1)-(5-phospho-beta-D-ribosyl)glycinamide + L-glutamine + ATP + H2O = 2-formamido-N(1)-(5-O-phospho-beta-D-ribosyl)acetamidine + L-glutamate + ADP + phosphate + H(+)</text>
        <dbReference type="Rhea" id="RHEA:17129"/>
        <dbReference type="ChEBI" id="CHEBI:15377"/>
        <dbReference type="ChEBI" id="CHEBI:15378"/>
        <dbReference type="ChEBI" id="CHEBI:29985"/>
        <dbReference type="ChEBI" id="CHEBI:30616"/>
        <dbReference type="ChEBI" id="CHEBI:43474"/>
        <dbReference type="ChEBI" id="CHEBI:58359"/>
        <dbReference type="ChEBI" id="CHEBI:147286"/>
        <dbReference type="ChEBI" id="CHEBI:147287"/>
        <dbReference type="ChEBI" id="CHEBI:456216"/>
        <dbReference type="EC" id="6.3.5.3"/>
    </reaction>
</comment>
<comment type="pathway">
    <text evidence="1">Purine metabolism; IMP biosynthesis via de novo pathway; 5-amino-1-(5-phospho-D-ribosyl)imidazole from N(2)-formyl-N(1)-(5-phospho-D-ribosyl)glycinamide: step 1/2.</text>
</comment>
<comment type="subunit">
    <text evidence="1">Monomer. Part of the FGAM synthase complex composed of 1 PurL, 1 PurQ and 2 PurS subunits.</text>
</comment>
<comment type="subcellular location">
    <subcellularLocation>
        <location evidence="1">Cytoplasm</location>
    </subcellularLocation>
</comment>
<comment type="similarity">
    <text evidence="1">Belongs to the FGAMS family.</text>
</comment>
<keyword id="KW-0067">ATP-binding</keyword>
<keyword id="KW-0963">Cytoplasm</keyword>
<keyword id="KW-0436">Ligase</keyword>
<keyword id="KW-0460">Magnesium</keyword>
<keyword id="KW-0479">Metal-binding</keyword>
<keyword id="KW-0547">Nucleotide-binding</keyword>
<keyword id="KW-0658">Purine biosynthesis</keyword>